<gene>
    <name type="primary">GLT1D1</name>
</gene>
<feature type="signal peptide" evidence="1">
    <location>
        <begin position="1"/>
        <end position="16"/>
    </location>
</feature>
<feature type="chain" id="PRO_0000312203" description="Glycosyltransferase 1 domain-containing protein 1">
    <location>
        <begin position="17"/>
        <end position="346"/>
    </location>
</feature>
<feature type="splice variant" id="VSP_029732" description="In isoform 3." evidence="3">
    <original>RFAVAFTESMKEMAQAQWPHAKGKVYVQSQGIATTPNAAFNWNTF</original>
    <variation>SRMLRVRSMSRVKELQQHQTPLLTGIPFFNALRLTKVLIICTYFF</variation>
    <location>
        <begin position="108"/>
        <end position="152"/>
    </location>
</feature>
<feature type="splice variant" id="VSP_029731" description="In isoform 2." evidence="2">
    <location>
        <begin position="126"/>
        <end position="205"/>
    </location>
</feature>
<feature type="splice variant" id="VSP_029733" description="In isoform 3." evidence="3">
    <location>
        <begin position="153"/>
        <end position="346"/>
    </location>
</feature>
<proteinExistence type="evidence at protein level"/>
<comment type="subcellular location">
    <subcellularLocation>
        <location evidence="4">Secreted</location>
    </subcellularLocation>
</comment>
<comment type="alternative products">
    <event type="alternative splicing"/>
    <isoform>
        <id>Q96MS3-1</id>
        <name>1</name>
        <sequence type="displayed"/>
    </isoform>
    <isoform>
        <id>Q96MS3-2</id>
        <name>2</name>
        <sequence type="described" ref="VSP_029731"/>
    </isoform>
    <isoform>
        <id>Q96MS3-3</id>
        <name>3</name>
        <sequence type="described" ref="VSP_029732 VSP_029733"/>
    </isoform>
</comment>
<comment type="similarity">
    <text evidence="4">Belongs to the glycosyltransferase group 1 family. Glycosyltransferase 4 subfamily.</text>
</comment>
<evidence type="ECO:0000255" key="1"/>
<evidence type="ECO:0000303" key="2">
    <source>
    </source>
</evidence>
<evidence type="ECO:0000303" key="3">
    <source>
    </source>
</evidence>
<evidence type="ECO:0000305" key="4"/>
<reference key="1">
    <citation type="journal article" date="2004" name="Nat. Genet.">
        <title>Complete sequencing and characterization of 21,243 full-length human cDNAs.</title>
        <authorList>
            <person name="Ota T."/>
            <person name="Suzuki Y."/>
            <person name="Nishikawa T."/>
            <person name="Otsuki T."/>
            <person name="Sugiyama T."/>
            <person name="Irie R."/>
            <person name="Wakamatsu A."/>
            <person name="Hayashi K."/>
            <person name="Sato H."/>
            <person name="Nagai K."/>
            <person name="Kimura K."/>
            <person name="Makita H."/>
            <person name="Sekine M."/>
            <person name="Obayashi M."/>
            <person name="Nishi T."/>
            <person name="Shibahara T."/>
            <person name="Tanaka T."/>
            <person name="Ishii S."/>
            <person name="Yamamoto J."/>
            <person name="Saito K."/>
            <person name="Kawai Y."/>
            <person name="Isono Y."/>
            <person name="Nakamura Y."/>
            <person name="Nagahari K."/>
            <person name="Murakami K."/>
            <person name="Yasuda T."/>
            <person name="Iwayanagi T."/>
            <person name="Wagatsuma M."/>
            <person name="Shiratori A."/>
            <person name="Sudo H."/>
            <person name="Hosoiri T."/>
            <person name="Kaku Y."/>
            <person name="Kodaira H."/>
            <person name="Kondo H."/>
            <person name="Sugawara M."/>
            <person name="Takahashi M."/>
            <person name="Kanda K."/>
            <person name="Yokoi T."/>
            <person name="Furuya T."/>
            <person name="Kikkawa E."/>
            <person name="Omura Y."/>
            <person name="Abe K."/>
            <person name="Kamihara K."/>
            <person name="Katsuta N."/>
            <person name="Sato K."/>
            <person name="Tanikawa M."/>
            <person name="Yamazaki M."/>
            <person name="Ninomiya K."/>
            <person name="Ishibashi T."/>
            <person name="Yamashita H."/>
            <person name="Murakawa K."/>
            <person name="Fujimori K."/>
            <person name="Tanai H."/>
            <person name="Kimata M."/>
            <person name="Watanabe M."/>
            <person name="Hiraoka S."/>
            <person name="Chiba Y."/>
            <person name="Ishida S."/>
            <person name="Ono Y."/>
            <person name="Takiguchi S."/>
            <person name="Watanabe S."/>
            <person name="Yosida M."/>
            <person name="Hotuta T."/>
            <person name="Kusano J."/>
            <person name="Kanehori K."/>
            <person name="Takahashi-Fujii A."/>
            <person name="Hara H."/>
            <person name="Tanase T.-O."/>
            <person name="Nomura Y."/>
            <person name="Togiya S."/>
            <person name="Komai F."/>
            <person name="Hara R."/>
            <person name="Takeuchi K."/>
            <person name="Arita M."/>
            <person name="Imose N."/>
            <person name="Musashino K."/>
            <person name="Yuuki H."/>
            <person name="Oshima A."/>
            <person name="Sasaki N."/>
            <person name="Aotsuka S."/>
            <person name="Yoshikawa Y."/>
            <person name="Matsunawa H."/>
            <person name="Ichihara T."/>
            <person name="Shiohata N."/>
            <person name="Sano S."/>
            <person name="Moriya S."/>
            <person name="Momiyama H."/>
            <person name="Satoh N."/>
            <person name="Takami S."/>
            <person name="Terashima Y."/>
            <person name="Suzuki O."/>
            <person name="Nakagawa S."/>
            <person name="Senoh A."/>
            <person name="Mizoguchi H."/>
            <person name="Goto Y."/>
            <person name="Shimizu F."/>
            <person name="Wakebe H."/>
            <person name="Hishigaki H."/>
            <person name="Watanabe T."/>
            <person name="Sugiyama A."/>
            <person name="Takemoto M."/>
            <person name="Kawakami B."/>
            <person name="Yamazaki M."/>
            <person name="Watanabe K."/>
            <person name="Kumagai A."/>
            <person name="Itakura S."/>
            <person name="Fukuzumi Y."/>
            <person name="Fujimori Y."/>
            <person name="Komiyama M."/>
            <person name="Tashiro H."/>
            <person name="Tanigami A."/>
            <person name="Fujiwara T."/>
            <person name="Ono T."/>
            <person name="Yamada K."/>
            <person name="Fujii Y."/>
            <person name="Ozaki K."/>
            <person name="Hirao M."/>
            <person name="Ohmori Y."/>
            <person name="Kawabata A."/>
            <person name="Hikiji T."/>
            <person name="Kobatake N."/>
            <person name="Inagaki H."/>
            <person name="Ikema Y."/>
            <person name="Okamoto S."/>
            <person name="Okitani R."/>
            <person name="Kawakami T."/>
            <person name="Noguchi S."/>
            <person name="Itoh T."/>
            <person name="Shigeta K."/>
            <person name="Senba T."/>
            <person name="Matsumura K."/>
            <person name="Nakajima Y."/>
            <person name="Mizuno T."/>
            <person name="Morinaga M."/>
            <person name="Sasaki M."/>
            <person name="Togashi T."/>
            <person name="Oyama M."/>
            <person name="Hata H."/>
            <person name="Watanabe M."/>
            <person name="Komatsu T."/>
            <person name="Mizushima-Sugano J."/>
            <person name="Satoh T."/>
            <person name="Shirai Y."/>
            <person name="Takahashi Y."/>
            <person name="Nakagawa K."/>
            <person name="Okumura K."/>
            <person name="Nagase T."/>
            <person name="Nomura N."/>
            <person name="Kikuchi H."/>
            <person name="Masuho Y."/>
            <person name="Yamashita R."/>
            <person name="Nakai K."/>
            <person name="Yada T."/>
            <person name="Nakamura Y."/>
            <person name="Ohara O."/>
            <person name="Isogai T."/>
            <person name="Sugano S."/>
        </authorList>
    </citation>
    <scope>NUCLEOTIDE SEQUENCE [LARGE SCALE MRNA] (ISOFORM 2)</scope>
    <source>
        <tissue>Teratocarcinoma</tissue>
    </source>
</reference>
<reference key="2">
    <citation type="journal article" date="2006" name="Nature">
        <title>The finished DNA sequence of human chromosome 12.</title>
        <authorList>
            <person name="Scherer S.E."/>
            <person name="Muzny D.M."/>
            <person name="Buhay C.J."/>
            <person name="Chen R."/>
            <person name="Cree A."/>
            <person name="Ding Y."/>
            <person name="Dugan-Rocha S."/>
            <person name="Gill R."/>
            <person name="Gunaratne P."/>
            <person name="Harris R.A."/>
            <person name="Hawes A.C."/>
            <person name="Hernandez J."/>
            <person name="Hodgson A.V."/>
            <person name="Hume J."/>
            <person name="Jackson A."/>
            <person name="Khan Z.M."/>
            <person name="Kovar-Smith C."/>
            <person name="Lewis L.R."/>
            <person name="Lozado R.J."/>
            <person name="Metzker M.L."/>
            <person name="Milosavljevic A."/>
            <person name="Miner G.R."/>
            <person name="Montgomery K.T."/>
            <person name="Morgan M.B."/>
            <person name="Nazareth L.V."/>
            <person name="Scott G."/>
            <person name="Sodergren E."/>
            <person name="Song X.-Z."/>
            <person name="Steffen D."/>
            <person name="Lovering R.C."/>
            <person name="Wheeler D.A."/>
            <person name="Worley K.C."/>
            <person name="Yuan Y."/>
            <person name="Zhang Z."/>
            <person name="Adams C.Q."/>
            <person name="Ansari-Lari M.A."/>
            <person name="Ayele M."/>
            <person name="Brown M.J."/>
            <person name="Chen G."/>
            <person name="Chen Z."/>
            <person name="Clerc-Blankenburg K.P."/>
            <person name="Davis C."/>
            <person name="Delgado O."/>
            <person name="Dinh H.H."/>
            <person name="Draper H."/>
            <person name="Gonzalez-Garay M.L."/>
            <person name="Havlak P."/>
            <person name="Jackson L.R."/>
            <person name="Jacob L.S."/>
            <person name="Kelly S.H."/>
            <person name="Li L."/>
            <person name="Li Z."/>
            <person name="Liu J."/>
            <person name="Liu W."/>
            <person name="Lu J."/>
            <person name="Maheshwari M."/>
            <person name="Nguyen B.-V."/>
            <person name="Okwuonu G.O."/>
            <person name="Pasternak S."/>
            <person name="Perez L.M."/>
            <person name="Plopper F.J.H."/>
            <person name="Santibanez J."/>
            <person name="Shen H."/>
            <person name="Tabor P.E."/>
            <person name="Verduzco D."/>
            <person name="Waldron L."/>
            <person name="Wang Q."/>
            <person name="Williams G.A."/>
            <person name="Zhang J."/>
            <person name="Zhou J."/>
            <person name="Allen C.C."/>
            <person name="Amin A.G."/>
            <person name="Anyalebechi V."/>
            <person name="Bailey M."/>
            <person name="Barbaria J.A."/>
            <person name="Bimage K.E."/>
            <person name="Bryant N.P."/>
            <person name="Burch P.E."/>
            <person name="Burkett C.E."/>
            <person name="Burrell K.L."/>
            <person name="Calderon E."/>
            <person name="Cardenas V."/>
            <person name="Carter K."/>
            <person name="Casias K."/>
            <person name="Cavazos I."/>
            <person name="Cavazos S.R."/>
            <person name="Ceasar H."/>
            <person name="Chacko J."/>
            <person name="Chan S.N."/>
            <person name="Chavez D."/>
            <person name="Christopoulos C."/>
            <person name="Chu J."/>
            <person name="Cockrell R."/>
            <person name="Cox C.D."/>
            <person name="Dang M."/>
            <person name="Dathorne S.R."/>
            <person name="David R."/>
            <person name="Davis C.M."/>
            <person name="Davy-Carroll L."/>
            <person name="Deshazo D.R."/>
            <person name="Donlin J.E."/>
            <person name="D'Souza L."/>
            <person name="Eaves K.A."/>
            <person name="Egan A."/>
            <person name="Emery-Cohen A.J."/>
            <person name="Escotto M."/>
            <person name="Flagg N."/>
            <person name="Forbes L.D."/>
            <person name="Gabisi A.M."/>
            <person name="Garza M."/>
            <person name="Hamilton C."/>
            <person name="Henderson N."/>
            <person name="Hernandez O."/>
            <person name="Hines S."/>
            <person name="Hogues M.E."/>
            <person name="Huang M."/>
            <person name="Idlebird D.G."/>
            <person name="Johnson R."/>
            <person name="Jolivet A."/>
            <person name="Jones S."/>
            <person name="Kagan R."/>
            <person name="King L.M."/>
            <person name="Leal B."/>
            <person name="Lebow H."/>
            <person name="Lee S."/>
            <person name="LeVan J.M."/>
            <person name="Lewis L.C."/>
            <person name="London P."/>
            <person name="Lorensuhewa L.M."/>
            <person name="Loulseged H."/>
            <person name="Lovett D.A."/>
            <person name="Lucier A."/>
            <person name="Lucier R.L."/>
            <person name="Ma J."/>
            <person name="Madu R.C."/>
            <person name="Mapua P."/>
            <person name="Martindale A.D."/>
            <person name="Martinez E."/>
            <person name="Massey E."/>
            <person name="Mawhiney S."/>
            <person name="Meador M.G."/>
            <person name="Mendez S."/>
            <person name="Mercado C."/>
            <person name="Mercado I.C."/>
            <person name="Merritt C.E."/>
            <person name="Miner Z.L."/>
            <person name="Minja E."/>
            <person name="Mitchell T."/>
            <person name="Mohabbat F."/>
            <person name="Mohabbat K."/>
            <person name="Montgomery B."/>
            <person name="Moore N."/>
            <person name="Morris S."/>
            <person name="Munidasa M."/>
            <person name="Ngo R.N."/>
            <person name="Nguyen N.B."/>
            <person name="Nickerson E."/>
            <person name="Nwaokelemeh O.O."/>
            <person name="Nwokenkwo S."/>
            <person name="Obregon M."/>
            <person name="Oguh M."/>
            <person name="Oragunye N."/>
            <person name="Oviedo R.J."/>
            <person name="Parish B.J."/>
            <person name="Parker D.N."/>
            <person name="Parrish J."/>
            <person name="Parks K.L."/>
            <person name="Paul H.A."/>
            <person name="Payton B.A."/>
            <person name="Perez A."/>
            <person name="Perrin W."/>
            <person name="Pickens A."/>
            <person name="Primus E.L."/>
            <person name="Pu L.-L."/>
            <person name="Puazo M."/>
            <person name="Quiles M.M."/>
            <person name="Quiroz J.B."/>
            <person name="Rabata D."/>
            <person name="Reeves K."/>
            <person name="Ruiz S.J."/>
            <person name="Shao H."/>
            <person name="Sisson I."/>
            <person name="Sonaike T."/>
            <person name="Sorelle R.P."/>
            <person name="Sutton A.E."/>
            <person name="Svatek A.F."/>
            <person name="Svetz L.A."/>
            <person name="Tamerisa K.S."/>
            <person name="Taylor T.R."/>
            <person name="Teague B."/>
            <person name="Thomas N."/>
            <person name="Thorn R.D."/>
            <person name="Trejos Z.Y."/>
            <person name="Trevino B.K."/>
            <person name="Ukegbu O.N."/>
            <person name="Urban J.B."/>
            <person name="Vasquez L.I."/>
            <person name="Vera V.A."/>
            <person name="Villasana D.M."/>
            <person name="Wang L."/>
            <person name="Ward-Moore S."/>
            <person name="Warren J.T."/>
            <person name="Wei X."/>
            <person name="White F."/>
            <person name="Williamson A.L."/>
            <person name="Wleczyk R."/>
            <person name="Wooden H.S."/>
            <person name="Wooden S.H."/>
            <person name="Yen J."/>
            <person name="Yoon L."/>
            <person name="Yoon V."/>
            <person name="Zorrilla S.E."/>
            <person name="Nelson D."/>
            <person name="Kucherlapati R."/>
            <person name="Weinstock G."/>
            <person name="Gibbs R.A."/>
        </authorList>
    </citation>
    <scope>NUCLEOTIDE SEQUENCE [LARGE SCALE GENOMIC DNA]</scope>
</reference>
<reference key="3">
    <citation type="submission" date="2005-07" db="EMBL/GenBank/DDBJ databases">
        <authorList>
            <person name="Mural R.J."/>
            <person name="Istrail S."/>
            <person name="Sutton G.G."/>
            <person name="Florea L."/>
            <person name="Halpern A.L."/>
            <person name="Mobarry C.M."/>
            <person name="Lippert R."/>
            <person name="Walenz B."/>
            <person name="Shatkay H."/>
            <person name="Dew I."/>
            <person name="Miller J.R."/>
            <person name="Flanigan M.J."/>
            <person name="Edwards N.J."/>
            <person name="Bolanos R."/>
            <person name="Fasulo D."/>
            <person name="Halldorsson B.V."/>
            <person name="Hannenhalli S."/>
            <person name="Turner R."/>
            <person name="Yooseph S."/>
            <person name="Lu F."/>
            <person name="Nusskern D.R."/>
            <person name="Shue B.C."/>
            <person name="Zheng X.H."/>
            <person name="Zhong F."/>
            <person name="Delcher A.L."/>
            <person name="Huson D.H."/>
            <person name="Kravitz S.A."/>
            <person name="Mouchard L."/>
            <person name="Reinert K."/>
            <person name="Remington K.A."/>
            <person name="Clark A.G."/>
            <person name="Waterman M.S."/>
            <person name="Eichler E.E."/>
            <person name="Adams M.D."/>
            <person name="Hunkapiller M.W."/>
            <person name="Myers E.W."/>
            <person name="Venter J.C."/>
        </authorList>
    </citation>
    <scope>NUCLEOTIDE SEQUENCE [LARGE SCALE GENOMIC DNA]</scope>
</reference>
<reference key="4">
    <citation type="journal article" date="2004" name="Genome Res.">
        <title>The status, quality, and expansion of the NIH full-length cDNA project: the Mammalian Gene Collection (MGC).</title>
        <authorList>
            <consortium name="The MGC Project Team"/>
        </authorList>
    </citation>
    <scope>NUCLEOTIDE SEQUENCE [LARGE SCALE MRNA] (ISOFORM 3)</scope>
    <source>
        <tissue>Brain</tissue>
    </source>
</reference>
<dbReference type="EC" id="2.4.-.-"/>
<dbReference type="EMBL" id="AK056540">
    <property type="protein sequence ID" value="BAB71209.1"/>
    <property type="molecule type" value="mRNA"/>
</dbReference>
<dbReference type="EMBL" id="AC069262">
    <property type="status" value="NOT_ANNOTATED_CDS"/>
    <property type="molecule type" value="Genomic_DNA"/>
</dbReference>
<dbReference type="EMBL" id="CH471054">
    <property type="protein sequence ID" value="EAW98497.1"/>
    <property type="molecule type" value="Genomic_DNA"/>
</dbReference>
<dbReference type="EMBL" id="CH471054">
    <property type="protein sequence ID" value="EAW98498.1"/>
    <property type="molecule type" value="Genomic_DNA"/>
</dbReference>
<dbReference type="EMBL" id="BC043528">
    <property type="protein sequence ID" value="AAH43528.1"/>
    <property type="molecule type" value="mRNA"/>
</dbReference>
<dbReference type="CCDS" id="CCDS91773.1">
    <molecule id="Q96MS3-1"/>
</dbReference>
<dbReference type="CCDS" id="CCDS9265.1">
    <molecule id="Q96MS3-2"/>
</dbReference>
<dbReference type="RefSeq" id="NP_001353815.1">
    <molecule id="Q96MS3-1"/>
    <property type="nucleotide sequence ID" value="NM_001366886.1"/>
</dbReference>
<dbReference type="RefSeq" id="NP_653270.1">
    <molecule id="Q96MS3-2"/>
    <property type="nucleotide sequence ID" value="NM_144669.3"/>
</dbReference>
<dbReference type="SMR" id="Q96MS3"/>
<dbReference type="BioGRID" id="126851">
    <property type="interactions" value="4"/>
</dbReference>
<dbReference type="FunCoup" id="Q96MS3">
    <property type="interactions" value="108"/>
</dbReference>
<dbReference type="IntAct" id="Q96MS3">
    <property type="interactions" value="4"/>
</dbReference>
<dbReference type="STRING" id="9606.ENSP00000281703"/>
<dbReference type="CAZy" id="GT4">
    <property type="family name" value="Glycosyltransferase Family 4"/>
</dbReference>
<dbReference type="GlyGen" id="Q96MS3">
    <property type="glycosylation" value="1 site, 1 N-linked glycan (1 site)"/>
</dbReference>
<dbReference type="BioMuta" id="GLT1D1"/>
<dbReference type="DMDM" id="162416226"/>
<dbReference type="MassIVE" id="Q96MS3"/>
<dbReference type="PeptideAtlas" id="Q96MS3"/>
<dbReference type="ProteomicsDB" id="77394">
    <molecule id="Q96MS3-1"/>
</dbReference>
<dbReference type="ProteomicsDB" id="77395">
    <molecule id="Q96MS3-2"/>
</dbReference>
<dbReference type="ProteomicsDB" id="77396">
    <molecule id="Q96MS3-3"/>
</dbReference>
<dbReference type="Antibodypedia" id="31929">
    <property type="antibodies" value="52 antibodies from 11 providers"/>
</dbReference>
<dbReference type="DNASU" id="144423"/>
<dbReference type="Ensembl" id="ENST00000281703.11">
    <molecule id="Q96MS3-2"/>
    <property type="protein sequence ID" value="ENSP00000281703.6"/>
    <property type="gene ID" value="ENSG00000151948.12"/>
</dbReference>
<dbReference type="Ensembl" id="ENST00000441390.6">
    <molecule id="Q96MS3-3"/>
    <property type="protein sequence ID" value="ENSP00000411992.2"/>
    <property type="gene ID" value="ENSG00000151948.12"/>
</dbReference>
<dbReference type="Ensembl" id="ENST00000442111.7">
    <molecule id="Q96MS3-1"/>
    <property type="protein sequence ID" value="ENSP00000394692.2"/>
    <property type="gene ID" value="ENSG00000151948.12"/>
</dbReference>
<dbReference type="Ensembl" id="ENST00000539044.5">
    <molecule id="Q96MS3-3"/>
    <property type="protein sequence ID" value="ENSP00000445064.1"/>
    <property type="gene ID" value="ENSG00000151948.12"/>
</dbReference>
<dbReference type="GeneID" id="144423"/>
<dbReference type="KEGG" id="hsa:144423"/>
<dbReference type="MANE-Select" id="ENST00000442111.7">
    <property type="protein sequence ID" value="ENSP00000394692.2"/>
    <property type="RefSeq nucleotide sequence ID" value="NM_001366886.1"/>
    <property type="RefSeq protein sequence ID" value="NP_001353815.1"/>
</dbReference>
<dbReference type="UCSC" id="uc001uhx.2">
    <molecule id="Q96MS3-1"/>
    <property type="organism name" value="human"/>
</dbReference>
<dbReference type="AGR" id="HGNC:26483"/>
<dbReference type="CTD" id="144423"/>
<dbReference type="DisGeNET" id="144423"/>
<dbReference type="GeneCards" id="GLT1D1"/>
<dbReference type="HGNC" id="HGNC:26483">
    <property type="gene designation" value="GLT1D1"/>
</dbReference>
<dbReference type="HPA" id="ENSG00000151948">
    <property type="expression patterns" value="Tissue enhanced (bone marrow, choroid plexus, liver)"/>
</dbReference>
<dbReference type="neXtProt" id="NX_Q96MS3"/>
<dbReference type="OpenTargets" id="ENSG00000151948"/>
<dbReference type="PharmGKB" id="PA128394758"/>
<dbReference type="VEuPathDB" id="HostDB:ENSG00000151948"/>
<dbReference type="eggNOG" id="ENOG502QQZE">
    <property type="taxonomic scope" value="Eukaryota"/>
</dbReference>
<dbReference type="GeneTree" id="ENSGT00390000016790"/>
<dbReference type="HOGENOM" id="CLU_009583_7_1_1"/>
<dbReference type="InParanoid" id="Q96MS3"/>
<dbReference type="OMA" id="FSEWHSE"/>
<dbReference type="OrthoDB" id="512920at2759"/>
<dbReference type="PAN-GO" id="Q96MS3">
    <property type="GO annotations" value="0 GO annotations based on evolutionary models"/>
</dbReference>
<dbReference type="PhylomeDB" id="Q96MS3"/>
<dbReference type="TreeFam" id="TF331382"/>
<dbReference type="PathwayCommons" id="Q96MS3"/>
<dbReference type="SignaLink" id="Q96MS3"/>
<dbReference type="BioGRID-ORCS" id="144423">
    <property type="hits" value="12 hits in 1144 CRISPR screens"/>
</dbReference>
<dbReference type="ChiTaRS" id="GLT1D1">
    <property type="organism name" value="human"/>
</dbReference>
<dbReference type="GenomeRNAi" id="144423"/>
<dbReference type="Pharos" id="Q96MS3">
    <property type="development level" value="Tdark"/>
</dbReference>
<dbReference type="PRO" id="PR:Q96MS3"/>
<dbReference type="Proteomes" id="UP000005640">
    <property type="component" value="Chromosome 12"/>
</dbReference>
<dbReference type="RNAct" id="Q96MS3">
    <property type="molecule type" value="protein"/>
</dbReference>
<dbReference type="Bgee" id="ENSG00000151948">
    <property type="expression patterns" value="Expressed in sperm and 147 other cell types or tissues"/>
</dbReference>
<dbReference type="ExpressionAtlas" id="Q96MS3">
    <property type="expression patterns" value="baseline and differential"/>
</dbReference>
<dbReference type="GO" id="GO:0005829">
    <property type="term" value="C:cytosol"/>
    <property type="evidence" value="ECO:0000314"/>
    <property type="project" value="HPA"/>
</dbReference>
<dbReference type="GO" id="GO:0005576">
    <property type="term" value="C:extracellular region"/>
    <property type="evidence" value="ECO:0007669"/>
    <property type="project" value="UniProtKB-SubCell"/>
</dbReference>
<dbReference type="GO" id="GO:0016757">
    <property type="term" value="F:glycosyltransferase activity"/>
    <property type="evidence" value="ECO:0007669"/>
    <property type="project" value="UniProtKB-KW"/>
</dbReference>
<dbReference type="CDD" id="cd03801">
    <property type="entry name" value="GT4_PimA-like"/>
    <property type="match status" value="1"/>
</dbReference>
<dbReference type="FunFam" id="3.40.50.2000:FF:000126">
    <property type="entry name" value="Glycosyltransferase 1 domain containing 1"/>
    <property type="match status" value="1"/>
</dbReference>
<dbReference type="Gene3D" id="3.40.50.2000">
    <property type="entry name" value="Glycogen Phosphorylase B"/>
    <property type="match status" value="2"/>
</dbReference>
<dbReference type="InterPro" id="IPR001296">
    <property type="entry name" value="Glyco_trans_1"/>
</dbReference>
<dbReference type="InterPro" id="IPR052622">
    <property type="entry name" value="Glycosyltransferase_G1"/>
</dbReference>
<dbReference type="PANTHER" id="PTHR46660">
    <property type="match status" value="1"/>
</dbReference>
<dbReference type="PANTHER" id="PTHR46660:SF2">
    <property type="entry name" value="GLYCOSYLTRANSFERASE 1 DOMAIN-CONTAINING PROTEIN 1"/>
    <property type="match status" value="1"/>
</dbReference>
<dbReference type="Pfam" id="PF00534">
    <property type="entry name" value="Glycos_transf_1"/>
    <property type="match status" value="1"/>
</dbReference>
<dbReference type="SUPFAM" id="SSF53756">
    <property type="entry name" value="UDP-Glycosyltransferase/glycogen phosphorylase"/>
    <property type="match status" value="1"/>
</dbReference>
<keyword id="KW-0025">Alternative splicing</keyword>
<keyword id="KW-0328">Glycosyltransferase</keyword>
<keyword id="KW-1267">Proteomics identification</keyword>
<keyword id="KW-1185">Reference proteome</keyword>
<keyword id="KW-0964">Secreted</keyword>
<keyword id="KW-0732">Signal</keyword>
<keyword id="KW-0808">Transferase</keyword>
<name>GL1D1_HUMAN</name>
<sequence length="346" mass="38507">MRLLFLAVLRPHTGNAVTAQRVRAHLEAAGHVCVLKDAFDFESRSEIANLILAENCEAALALHLYRGGRLLQGHRIPFGVIFGGTDVNEDANQAEKNTVMGRVLEEARFAVAFTESMKEMAQAQWPHAKGKVYVQSQGIATTPNAAFNWNTFLQRSEINQSADNLHIFLLICGLRQVKDPLYLVDAFSAWHQEEPNVHLVIVGPEVDPVFTREVKAKVKRAAGVRLIGEMPQEDLHAVVKNCFAVVNSSVSEGMSAAILEAMDLEVPVLARNIPGNAAVVKHEVTGLLFSNPQEFVHLAKRLVSDPALEKEIVVNGREYVRMYHSWQVERDTYQQLIRKLEGSTED</sequence>
<protein>
    <recommendedName>
        <fullName>Glycosyltransferase 1 domain-containing protein 1</fullName>
        <ecNumber>2.4.-.-</ecNumber>
    </recommendedName>
</protein>
<organism>
    <name type="scientific">Homo sapiens</name>
    <name type="common">Human</name>
    <dbReference type="NCBI Taxonomy" id="9606"/>
    <lineage>
        <taxon>Eukaryota</taxon>
        <taxon>Metazoa</taxon>
        <taxon>Chordata</taxon>
        <taxon>Craniata</taxon>
        <taxon>Vertebrata</taxon>
        <taxon>Euteleostomi</taxon>
        <taxon>Mammalia</taxon>
        <taxon>Eutheria</taxon>
        <taxon>Euarchontoglires</taxon>
        <taxon>Primates</taxon>
        <taxon>Haplorrhini</taxon>
        <taxon>Catarrhini</taxon>
        <taxon>Hominidae</taxon>
        <taxon>Homo</taxon>
    </lineage>
</organism>
<accession>Q96MS3</accession>
<accession>Q86XG8</accession>